<keyword id="KW-0975">Bacterial flagellum</keyword>
<keyword id="KW-1185">Reference proteome</keyword>
<accession>Q06171</accession>
<sequence length="245" mass="26417">MDNALYVGLSRQMTLRRELDIVANNIANANTTGFKVEDLMVRTEQAKPAKTLDGSSPVKFVMDTGVARNFTQGPMTKTGGDYDLAINGMGFFKVQANGGERYTRDGRFTTNPEGILVTQAGAPVLDDGGGQITIDPRLGPVTVGKDGIVSQGAIRVGRIGLVRPDDLSTFAKDGDNLYRNTTNTAPQPVTDAQIHQGMLEASNVQPVIEITKLIEIQRAYESVAKMMDNTAELSRSAVERLGKIN</sequence>
<evidence type="ECO:0000250" key="1"/>
<evidence type="ECO:0000305" key="2"/>
<name>FLGF_CAUVC</name>
<comment type="subunit">
    <text evidence="1">The basal body constitutes a major portion of the flagellar organelle and consists of five rings (E,L,P,S, and M) mounted on a central rod. The rod consists of about 26 subunits of FlgG in the distal portion, and FlgB, FlgC and FlgF are thought to build up the proximal portion of the rod with about 6 subunits each (By similarity).</text>
</comment>
<comment type="subcellular location">
    <subcellularLocation>
        <location evidence="1">Bacterial flagellum basal body</location>
    </subcellularLocation>
</comment>
<comment type="similarity">
    <text evidence="2">Belongs to the flagella basal body rod proteins family.</text>
</comment>
<gene>
    <name type="primary">flgF</name>
    <name type="synonym">flaC</name>
    <name type="ordered locus">CC_2063</name>
</gene>
<feature type="chain" id="PRO_0000180837" description="Flagellar basal-body rod protein FlgF">
    <location>
        <begin position="1"/>
        <end position="245"/>
    </location>
</feature>
<feature type="sequence conflict" description="In Ref. 1; AAB24738." evidence="2" ref="1">
    <original>L</original>
    <variation>V</variation>
    <location>
        <position position="15"/>
    </location>
</feature>
<feature type="sequence conflict" description="In Ref. 1; AAB24738." evidence="2" ref="1">
    <original>A</original>
    <variation>R</variation>
    <location>
        <position position="67"/>
    </location>
</feature>
<feature type="sequence conflict" description="In Ref. 1." evidence="2" ref="1">
    <original>SAVERLGKIN</original>
    <variation>TPSSVWARST</variation>
    <location>
        <begin position="236"/>
        <end position="245"/>
    </location>
</feature>
<reference key="1">
    <citation type="journal article" date="1992" name="J. Mol. Biol.">
        <title>Organization and ordered expression of Caulobacter genes encoding flagellar basal body rod and ring proteins.</title>
        <authorList>
            <person name="Dingwall A."/>
            <person name="Garman J.D."/>
            <person name="Shapiro L."/>
        </authorList>
    </citation>
    <scope>NUCLEOTIDE SEQUENCE [GENOMIC DNA]</scope>
    <source>
        <strain>ATCC 19089 / CIP 103742 / CB 15</strain>
    </source>
</reference>
<reference key="2">
    <citation type="journal article" date="2001" name="Proc. Natl. Acad. Sci. U.S.A.">
        <title>Complete genome sequence of Caulobacter crescentus.</title>
        <authorList>
            <person name="Nierman W.C."/>
            <person name="Feldblyum T.V."/>
            <person name="Laub M.T."/>
            <person name="Paulsen I.T."/>
            <person name="Nelson K.E."/>
            <person name="Eisen J.A."/>
            <person name="Heidelberg J.F."/>
            <person name="Alley M.R.K."/>
            <person name="Ohta N."/>
            <person name="Maddock J.R."/>
            <person name="Potocka I."/>
            <person name="Nelson W.C."/>
            <person name="Newton A."/>
            <person name="Stephens C."/>
            <person name="Phadke N.D."/>
            <person name="Ely B."/>
            <person name="DeBoy R.T."/>
            <person name="Dodson R.J."/>
            <person name="Durkin A.S."/>
            <person name="Gwinn M.L."/>
            <person name="Haft D.H."/>
            <person name="Kolonay J.F."/>
            <person name="Smit J."/>
            <person name="Craven M.B."/>
            <person name="Khouri H.M."/>
            <person name="Shetty J."/>
            <person name="Berry K.J."/>
            <person name="Utterback T.R."/>
            <person name="Tran K."/>
            <person name="Wolf A.M."/>
            <person name="Vamathevan J.J."/>
            <person name="Ermolaeva M.D."/>
            <person name="White O."/>
            <person name="Salzberg S.L."/>
            <person name="Venter J.C."/>
            <person name="Shapiro L."/>
            <person name="Fraser C.M."/>
        </authorList>
    </citation>
    <scope>NUCLEOTIDE SEQUENCE [LARGE SCALE GENOMIC DNA]</scope>
    <source>
        <strain>ATCC 19089 / CIP 103742 / CB 15</strain>
    </source>
</reference>
<dbReference type="EMBL" id="S52478">
    <property type="protein sequence ID" value="AAB24738.1"/>
    <property type="molecule type" value="Genomic_DNA"/>
</dbReference>
<dbReference type="EMBL" id="AE005673">
    <property type="protein sequence ID" value="AAK24034.1"/>
    <property type="molecule type" value="Genomic_DNA"/>
</dbReference>
<dbReference type="PIR" id="F87504">
    <property type="entry name" value="F87504"/>
</dbReference>
<dbReference type="PIR" id="S27303">
    <property type="entry name" value="S27303"/>
</dbReference>
<dbReference type="RefSeq" id="NP_420866.1">
    <property type="nucleotide sequence ID" value="NC_002696.2"/>
</dbReference>
<dbReference type="RefSeq" id="WP_010919924.1">
    <property type="nucleotide sequence ID" value="NC_002696.2"/>
</dbReference>
<dbReference type="SMR" id="Q06171"/>
<dbReference type="STRING" id="190650.CC_2063"/>
<dbReference type="EnsemblBacteria" id="AAK24034">
    <property type="protein sequence ID" value="AAK24034"/>
    <property type="gene ID" value="CC_2063"/>
</dbReference>
<dbReference type="KEGG" id="ccr:CC_2063"/>
<dbReference type="PATRIC" id="fig|190650.5.peg.2082"/>
<dbReference type="eggNOG" id="COG4786">
    <property type="taxonomic scope" value="Bacteria"/>
</dbReference>
<dbReference type="HOGENOM" id="CLU_013687_0_0_5"/>
<dbReference type="BioCyc" id="CAULO:CC2063-MONOMER"/>
<dbReference type="Proteomes" id="UP000001816">
    <property type="component" value="Chromosome"/>
</dbReference>
<dbReference type="GO" id="GO:0030694">
    <property type="term" value="C:bacterial-type flagellum basal body, rod"/>
    <property type="evidence" value="ECO:0007669"/>
    <property type="project" value="InterPro"/>
</dbReference>
<dbReference type="GO" id="GO:0071978">
    <property type="term" value="P:bacterial-type flagellum-dependent swarming motility"/>
    <property type="evidence" value="ECO:0007669"/>
    <property type="project" value="TreeGrafter"/>
</dbReference>
<dbReference type="InterPro" id="IPR001444">
    <property type="entry name" value="Flag_bb_rod_N"/>
</dbReference>
<dbReference type="InterPro" id="IPR019776">
    <property type="entry name" value="Flagellar_basal_body_rod_CS"/>
</dbReference>
<dbReference type="InterPro" id="IPR020013">
    <property type="entry name" value="Flagellar_FlgE/F/G"/>
</dbReference>
<dbReference type="InterPro" id="IPR010930">
    <property type="entry name" value="Flg_bb/hook_C_dom"/>
</dbReference>
<dbReference type="InterPro" id="IPR037925">
    <property type="entry name" value="FlgE/F/G-like"/>
</dbReference>
<dbReference type="InterPro" id="IPR012836">
    <property type="entry name" value="FlgF"/>
</dbReference>
<dbReference type="InterPro" id="IPR053967">
    <property type="entry name" value="LlgE_F_G-like_D1"/>
</dbReference>
<dbReference type="NCBIfam" id="TIGR03506">
    <property type="entry name" value="FlgEFG_subfam"/>
    <property type="match status" value="1"/>
</dbReference>
<dbReference type="NCBIfam" id="TIGR02490">
    <property type="entry name" value="flgF"/>
    <property type="match status" value="1"/>
</dbReference>
<dbReference type="PANTHER" id="PTHR30435:SF19">
    <property type="entry name" value="FLAGELLAR BASAL-BODY ROD PROTEIN FLGG"/>
    <property type="match status" value="1"/>
</dbReference>
<dbReference type="PANTHER" id="PTHR30435">
    <property type="entry name" value="FLAGELLAR PROTEIN"/>
    <property type="match status" value="1"/>
</dbReference>
<dbReference type="Pfam" id="PF00460">
    <property type="entry name" value="Flg_bb_rod"/>
    <property type="match status" value="1"/>
</dbReference>
<dbReference type="Pfam" id="PF06429">
    <property type="entry name" value="Flg_bbr_C"/>
    <property type="match status" value="1"/>
</dbReference>
<dbReference type="Pfam" id="PF22692">
    <property type="entry name" value="LlgE_F_G_D1"/>
    <property type="match status" value="1"/>
</dbReference>
<dbReference type="SUPFAM" id="SSF117143">
    <property type="entry name" value="Flagellar hook protein flgE"/>
    <property type="match status" value="1"/>
</dbReference>
<dbReference type="PROSITE" id="PS00588">
    <property type="entry name" value="FLAGELLA_BB_ROD"/>
    <property type="match status" value="1"/>
</dbReference>
<organism>
    <name type="scientific">Caulobacter vibrioides (strain ATCC 19089 / CIP 103742 / CB 15)</name>
    <name type="common">Caulobacter crescentus</name>
    <dbReference type="NCBI Taxonomy" id="190650"/>
    <lineage>
        <taxon>Bacteria</taxon>
        <taxon>Pseudomonadati</taxon>
        <taxon>Pseudomonadota</taxon>
        <taxon>Alphaproteobacteria</taxon>
        <taxon>Caulobacterales</taxon>
        <taxon>Caulobacteraceae</taxon>
        <taxon>Caulobacter</taxon>
    </lineage>
</organism>
<proteinExistence type="inferred from homology"/>
<protein>
    <recommendedName>
        <fullName>Flagellar basal-body rod protein FlgF</fullName>
    </recommendedName>
</protein>